<name>BPT_CAMJR</name>
<reference key="1">
    <citation type="journal article" date="2005" name="PLoS Biol.">
        <title>Major structural differences and novel potential virulence mechanisms from the genomes of multiple Campylobacter species.</title>
        <authorList>
            <person name="Fouts D.E."/>
            <person name="Mongodin E.F."/>
            <person name="Mandrell R.E."/>
            <person name="Miller W.G."/>
            <person name="Rasko D.A."/>
            <person name="Ravel J."/>
            <person name="Brinkac L.M."/>
            <person name="DeBoy R.T."/>
            <person name="Parker C.T."/>
            <person name="Daugherty S.C."/>
            <person name="Dodson R.J."/>
            <person name="Durkin A.S."/>
            <person name="Madupu R."/>
            <person name="Sullivan S.A."/>
            <person name="Shetty J.U."/>
            <person name="Ayodeji M.A."/>
            <person name="Shvartsbeyn A."/>
            <person name="Schatz M.C."/>
            <person name="Badger J.H."/>
            <person name="Fraser C.M."/>
            <person name="Nelson K.E."/>
        </authorList>
    </citation>
    <scope>NUCLEOTIDE SEQUENCE [LARGE SCALE GENOMIC DNA]</scope>
    <source>
        <strain>RM1221</strain>
    </source>
</reference>
<protein>
    <recommendedName>
        <fullName evidence="1">Aspartate/glutamate leucyltransferase</fullName>
        <ecNumber evidence="1">2.3.2.29</ecNumber>
    </recommendedName>
</protein>
<feature type="chain" id="PRO_0000263181" description="Aspartate/glutamate leucyltransferase">
    <location>
        <begin position="1"/>
        <end position="239"/>
    </location>
</feature>
<comment type="function">
    <text evidence="1">Functions in the N-end rule pathway of protein degradation where it conjugates Leu from its aminoacyl-tRNA to the N-termini of proteins containing an N-terminal aspartate or glutamate.</text>
</comment>
<comment type="catalytic activity">
    <reaction evidence="1">
        <text>N-terminal L-glutamyl-[protein] + L-leucyl-tRNA(Leu) = N-terminal L-leucyl-L-glutamyl-[protein] + tRNA(Leu) + H(+)</text>
        <dbReference type="Rhea" id="RHEA:50412"/>
        <dbReference type="Rhea" id="RHEA-COMP:9613"/>
        <dbReference type="Rhea" id="RHEA-COMP:9622"/>
        <dbReference type="Rhea" id="RHEA-COMP:12664"/>
        <dbReference type="Rhea" id="RHEA-COMP:12668"/>
        <dbReference type="ChEBI" id="CHEBI:15378"/>
        <dbReference type="ChEBI" id="CHEBI:64721"/>
        <dbReference type="ChEBI" id="CHEBI:78442"/>
        <dbReference type="ChEBI" id="CHEBI:78494"/>
        <dbReference type="ChEBI" id="CHEBI:133041"/>
        <dbReference type="EC" id="2.3.2.29"/>
    </reaction>
</comment>
<comment type="catalytic activity">
    <reaction evidence="1">
        <text>N-terminal L-aspartyl-[protein] + L-leucyl-tRNA(Leu) = N-terminal L-leucyl-L-aspartyl-[protein] + tRNA(Leu) + H(+)</text>
        <dbReference type="Rhea" id="RHEA:50420"/>
        <dbReference type="Rhea" id="RHEA-COMP:9613"/>
        <dbReference type="Rhea" id="RHEA-COMP:9622"/>
        <dbReference type="Rhea" id="RHEA-COMP:12669"/>
        <dbReference type="Rhea" id="RHEA-COMP:12674"/>
        <dbReference type="ChEBI" id="CHEBI:15378"/>
        <dbReference type="ChEBI" id="CHEBI:64720"/>
        <dbReference type="ChEBI" id="CHEBI:78442"/>
        <dbReference type="ChEBI" id="CHEBI:78494"/>
        <dbReference type="ChEBI" id="CHEBI:133042"/>
        <dbReference type="EC" id="2.3.2.29"/>
    </reaction>
</comment>
<comment type="subcellular location">
    <subcellularLocation>
        <location evidence="1">Cytoplasm</location>
    </subcellularLocation>
</comment>
<comment type="similarity">
    <text evidence="1">Belongs to the R-transferase family. Bpt subfamily.</text>
</comment>
<organism>
    <name type="scientific">Campylobacter jejuni (strain RM1221)</name>
    <dbReference type="NCBI Taxonomy" id="195099"/>
    <lineage>
        <taxon>Bacteria</taxon>
        <taxon>Pseudomonadati</taxon>
        <taxon>Campylobacterota</taxon>
        <taxon>Epsilonproteobacteria</taxon>
        <taxon>Campylobacterales</taxon>
        <taxon>Campylobacteraceae</taxon>
        <taxon>Campylobacter</taxon>
    </lineage>
</organism>
<proteinExistence type="inferred from homology"/>
<sequence>MLEIGFCTLEDQCPYLKDKRSRIEYNYIENCPKEINNELIKRGWRRFGRYFSRPICKDCDECLSLRILVNEYNFSRSERRVVNKNINTKVILRTPNLSNEHLFLYDKYHRFMEEKKNWKRYDLSFKQYYNLYVDGFMNFGYELAFYIEDKLVCVDLIDILEDGISSIYCFYDPDFSYFSLGKFSLLNEIQIAKKMNLDYIYLGYFVKKCQSLSYKADYTPNEILKGTKELFENEVLWEK</sequence>
<accession>Q5HU66</accession>
<keyword id="KW-0012">Acyltransferase</keyword>
<keyword id="KW-0963">Cytoplasm</keyword>
<keyword id="KW-0808">Transferase</keyword>
<gene>
    <name evidence="1" type="primary">bpt</name>
    <name type="ordered locus">CJE1179</name>
</gene>
<evidence type="ECO:0000255" key="1">
    <source>
        <dbReference type="HAMAP-Rule" id="MF_00689"/>
    </source>
</evidence>
<dbReference type="EC" id="2.3.2.29" evidence="1"/>
<dbReference type="EMBL" id="CP000025">
    <property type="protein sequence ID" value="AAW35504.1"/>
    <property type="molecule type" value="Genomic_DNA"/>
</dbReference>
<dbReference type="RefSeq" id="WP_011049872.1">
    <property type="nucleotide sequence ID" value="NC_003912.7"/>
</dbReference>
<dbReference type="SMR" id="Q5HU66"/>
<dbReference type="KEGG" id="cjr:CJE1179"/>
<dbReference type="HOGENOM" id="CLU_077607_0_0_7"/>
<dbReference type="GO" id="GO:0005737">
    <property type="term" value="C:cytoplasm"/>
    <property type="evidence" value="ECO:0007669"/>
    <property type="project" value="UniProtKB-SubCell"/>
</dbReference>
<dbReference type="GO" id="GO:0004057">
    <property type="term" value="F:arginyl-tRNA--protein transferase activity"/>
    <property type="evidence" value="ECO:0007669"/>
    <property type="project" value="InterPro"/>
</dbReference>
<dbReference type="GO" id="GO:0008914">
    <property type="term" value="F:leucyl-tRNA--protein transferase activity"/>
    <property type="evidence" value="ECO:0007669"/>
    <property type="project" value="UniProtKB-UniRule"/>
</dbReference>
<dbReference type="GO" id="GO:0071596">
    <property type="term" value="P:ubiquitin-dependent protein catabolic process via the N-end rule pathway"/>
    <property type="evidence" value="ECO:0007669"/>
    <property type="project" value="InterPro"/>
</dbReference>
<dbReference type="HAMAP" id="MF_00689">
    <property type="entry name" value="Bpt"/>
    <property type="match status" value="1"/>
</dbReference>
<dbReference type="InterPro" id="IPR016181">
    <property type="entry name" value="Acyl_CoA_acyltransferase"/>
</dbReference>
<dbReference type="InterPro" id="IPR017138">
    <property type="entry name" value="Asp_Glu_LeuTrfase"/>
</dbReference>
<dbReference type="InterPro" id="IPR030700">
    <property type="entry name" value="N-end_Aminoacyl_Trfase"/>
</dbReference>
<dbReference type="InterPro" id="IPR007472">
    <property type="entry name" value="N-end_Aminoacyl_Trfase_C"/>
</dbReference>
<dbReference type="InterPro" id="IPR007471">
    <property type="entry name" value="N-end_Aminoacyl_Trfase_N"/>
</dbReference>
<dbReference type="NCBIfam" id="NF002344">
    <property type="entry name" value="PRK01305.2-1"/>
    <property type="match status" value="1"/>
</dbReference>
<dbReference type="NCBIfam" id="NF002346">
    <property type="entry name" value="PRK01305.2-3"/>
    <property type="match status" value="1"/>
</dbReference>
<dbReference type="PANTHER" id="PTHR21367">
    <property type="entry name" value="ARGININE-TRNA-PROTEIN TRANSFERASE 1"/>
    <property type="match status" value="1"/>
</dbReference>
<dbReference type="PANTHER" id="PTHR21367:SF1">
    <property type="entry name" value="ARGINYL-TRNA--PROTEIN TRANSFERASE 1"/>
    <property type="match status" value="1"/>
</dbReference>
<dbReference type="Pfam" id="PF04377">
    <property type="entry name" value="ATE_C"/>
    <property type="match status" value="1"/>
</dbReference>
<dbReference type="Pfam" id="PF04376">
    <property type="entry name" value="ATE_N"/>
    <property type="match status" value="1"/>
</dbReference>
<dbReference type="PIRSF" id="PIRSF037208">
    <property type="entry name" value="ATE_pro_prd"/>
    <property type="match status" value="1"/>
</dbReference>
<dbReference type="SUPFAM" id="SSF55729">
    <property type="entry name" value="Acyl-CoA N-acyltransferases (Nat)"/>
    <property type="match status" value="1"/>
</dbReference>